<keyword id="KW-0963">Cytoplasm</keyword>
<keyword id="KW-0285">Flavoprotein</keyword>
<keyword id="KW-0288">FMN</keyword>
<keyword id="KW-0413">Isomerase</keyword>
<keyword id="KW-0414">Isoprene biosynthesis</keyword>
<keyword id="KW-0460">Magnesium</keyword>
<keyword id="KW-0479">Metal-binding</keyword>
<keyword id="KW-0521">NADP</keyword>
<proteinExistence type="inferred from homology"/>
<name>IDI2_RICPU</name>
<accession>C4K1D6</accession>
<protein>
    <recommendedName>
        <fullName evidence="1">Isopentenyl-diphosphate delta-isomerase</fullName>
        <shortName evidence="1">IPP isomerase</shortName>
        <ecNumber evidence="1">5.3.3.2</ecNumber>
    </recommendedName>
    <alternativeName>
        <fullName evidence="1">Isopentenyl diphosphate:dimethylallyl diphosphate isomerase</fullName>
    </alternativeName>
    <alternativeName>
        <fullName evidence="1">Isopentenyl pyrophosphate isomerase</fullName>
    </alternativeName>
    <alternativeName>
        <fullName evidence="1">Type 2 isopentenyl diphosphate isomerase</fullName>
        <shortName evidence="1">IDI-2</shortName>
    </alternativeName>
</protein>
<gene>
    <name evidence="1" type="primary">fni</name>
    <name type="ordered locus">RPR_02950</name>
</gene>
<reference key="1">
    <citation type="journal article" date="2009" name="PLoS ONE">
        <title>Genome sequence of the endosymbiont Rickettsia peacockii and comparison with virulent Rickettsia rickettsii: identification of virulence factors.</title>
        <authorList>
            <person name="Felsheim R.F."/>
            <person name="Kurtti T.J."/>
            <person name="Munderloh U.G."/>
        </authorList>
    </citation>
    <scope>NUCLEOTIDE SEQUENCE [LARGE SCALE GENOMIC DNA]</scope>
    <source>
        <strain>Rustic</strain>
    </source>
</reference>
<sequence>MLKDQNLDIERKQDHIEINLTKNVESTLKSGFESIHFIHNALPEINYDSVNTTTTFLGKSLQAPILISSMTGGTTRARDINYRLAQVAQKAGIAMGLGSMRVLLTEPDTIKTFAVRHIAPDIPLLANIGAVQLNYGVTPKECQYLVDAIKADALILHLNVLQELTQPEGNRNWEKLLPKIREVVHYLSIPVIVKEVGYGLSKKVAESLIEAGVKVLDIAGSGGTSWSQVEAYRATNSLQNRIASSFINWGIPTLDSLKMVREVSKDIPIITSGGLKSGIDGAKAIRIGANIFGLAGQFLKAADTSESLLFEEIQLIIEQLKITMLCTGSRTLKDLAKAEIRL</sequence>
<evidence type="ECO:0000255" key="1">
    <source>
        <dbReference type="HAMAP-Rule" id="MF_00354"/>
    </source>
</evidence>
<dbReference type="EC" id="5.3.3.2" evidence="1"/>
<dbReference type="EMBL" id="CP001227">
    <property type="protein sequence ID" value="ACR47387.1"/>
    <property type="molecule type" value="Genomic_DNA"/>
</dbReference>
<dbReference type="RefSeq" id="WP_012736639.1">
    <property type="nucleotide sequence ID" value="NC_012730.1"/>
</dbReference>
<dbReference type="SMR" id="C4K1D6"/>
<dbReference type="KEGG" id="rpk:RPR_02950"/>
<dbReference type="HOGENOM" id="CLU_065515_1_0_5"/>
<dbReference type="Proteomes" id="UP000005015">
    <property type="component" value="Chromosome"/>
</dbReference>
<dbReference type="GO" id="GO:0005737">
    <property type="term" value="C:cytoplasm"/>
    <property type="evidence" value="ECO:0007669"/>
    <property type="project" value="UniProtKB-SubCell"/>
</dbReference>
<dbReference type="GO" id="GO:0010181">
    <property type="term" value="F:FMN binding"/>
    <property type="evidence" value="ECO:0007669"/>
    <property type="project" value="UniProtKB-UniRule"/>
</dbReference>
<dbReference type="GO" id="GO:0004452">
    <property type="term" value="F:isopentenyl-diphosphate delta-isomerase activity"/>
    <property type="evidence" value="ECO:0007669"/>
    <property type="project" value="UniProtKB-UniRule"/>
</dbReference>
<dbReference type="GO" id="GO:0000287">
    <property type="term" value="F:magnesium ion binding"/>
    <property type="evidence" value="ECO:0007669"/>
    <property type="project" value="UniProtKB-UniRule"/>
</dbReference>
<dbReference type="GO" id="GO:0070402">
    <property type="term" value="F:NADPH binding"/>
    <property type="evidence" value="ECO:0007669"/>
    <property type="project" value="UniProtKB-UniRule"/>
</dbReference>
<dbReference type="GO" id="GO:0016491">
    <property type="term" value="F:oxidoreductase activity"/>
    <property type="evidence" value="ECO:0007669"/>
    <property type="project" value="InterPro"/>
</dbReference>
<dbReference type="GO" id="GO:0008299">
    <property type="term" value="P:isoprenoid biosynthetic process"/>
    <property type="evidence" value="ECO:0007669"/>
    <property type="project" value="UniProtKB-UniRule"/>
</dbReference>
<dbReference type="CDD" id="cd02811">
    <property type="entry name" value="IDI-2_FMN"/>
    <property type="match status" value="1"/>
</dbReference>
<dbReference type="Gene3D" id="3.20.20.70">
    <property type="entry name" value="Aldolase class I"/>
    <property type="match status" value="1"/>
</dbReference>
<dbReference type="HAMAP" id="MF_00354">
    <property type="entry name" value="Idi_2"/>
    <property type="match status" value="1"/>
</dbReference>
<dbReference type="InterPro" id="IPR013785">
    <property type="entry name" value="Aldolase_TIM"/>
</dbReference>
<dbReference type="InterPro" id="IPR000262">
    <property type="entry name" value="FMN-dep_DH"/>
</dbReference>
<dbReference type="InterPro" id="IPR011179">
    <property type="entry name" value="IPdP_isomerase"/>
</dbReference>
<dbReference type="NCBIfam" id="TIGR02151">
    <property type="entry name" value="IPP_isom_2"/>
    <property type="match status" value="1"/>
</dbReference>
<dbReference type="PANTHER" id="PTHR43665">
    <property type="entry name" value="ISOPENTENYL-DIPHOSPHATE DELTA-ISOMERASE"/>
    <property type="match status" value="1"/>
</dbReference>
<dbReference type="PANTHER" id="PTHR43665:SF1">
    <property type="entry name" value="ISOPENTENYL-DIPHOSPHATE DELTA-ISOMERASE"/>
    <property type="match status" value="1"/>
</dbReference>
<dbReference type="Pfam" id="PF01070">
    <property type="entry name" value="FMN_dh"/>
    <property type="match status" value="2"/>
</dbReference>
<dbReference type="PIRSF" id="PIRSF003314">
    <property type="entry name" value="IPP_isomerase"/>
    <property type="match status" value="1"/>
</dbReference>
<dbReference type="SUPFAM" id="SSF51395">
    <property type="entry name" value="FMN-linked oxidoreductases"/>
    <property type="match status" value="1"/>
</dbReference>
<feature type="chain" id="PRO_1000205352" description="Isopentenyl-diphosphate delta-isomerase">
    <location>
        <begin position="1"/>
        <end position="342"/>
    </location>
</feature>
<feature type="binding site" evidence="1">
    <location>
        <begin position="11"/>
        <end position="12"/>
    </location>
    <ligand>
        <name>substrate</name>
    </ligand>
</feature>
<feature type="binding site" evidence="1">
    <location>
        <position position="68"/>
    </location>
    <ligand>
        <name>FMN</name>
        <dbReference type="ChEBI" id="CHEBI:58210"/>
    </ligand>
</feature>
<feature type="binding site" evidence="1">
    <location>
        <begin position="69"/>
        <end position="71"/>
    </location>
    <ligand>
        <name>FMN</name>
        <dbReference type="ChEBI" id="CHEBI:58210"/>
    </ligand>
</feature>
<feature type="binding site" evidence="1">
    <location>
        <begin position="99"/>
        <end position="101"/>
    </location>
    <ligand>
        <name>substrate</name>
    </ligand>
</feature>
<feature type="binding site" evidence="1">
    <location>
        <position position="99"/>
    </location>
    <ligand>
        <name>FMN</name>
        <dbReference type="ChEBI" id="CHEBI:58210"/>
    </ligand>
</feature>
<feature type="binding site" evidence="1">
    <location>
        <position position="127"/>
    </location>
    <ligand>
        <name>FMN</name>
        <dbReference type="ChEBI" id="CHEBI:58210"/>
    </ligand>
</feature>
<feature type="binding site" evidence="1">
    <location>
        <position position="162"/>
    </location>
    <ligand>
        <name>substrate</name>
    </ligand>
</feature>
<feature type="binding site" evidence="1">
    <location>
        <position position="163"/>
    </location>
    <ligand>
        <name>Mg(2+)</name>
        <dbReference type="ChEBI" id="CHEBI:18420"/>
    </ligand>
</feature>
<feature type="binding site" evidence="1">
    <location>
        <position position="194"/>
    </location>
    <ligand>
        <name>FMN</name>
        <dbReference type="ChEBI" id="CHEBI:58210"/>
    </ligand>
</feature>
<feature type="binding site" evidence="1">
    <location>
        <position position="224"/>
    </location>
    <ligand>
        <name>FMN</name>
        <dbReference type="ChEBI" id="CHEBI:58210"/>
    </ligand>
</feature>
<feature type="binding site" evidence="1">
    <location>
        <begin position="274"/>
        <end position="276"/>
    </location>
    <ligand>
        <name>FMN</name>
        <dbReference type="ChEBI" id="CHEBI:58210"/>
    </ligand>
</feature>
<feature type="binding site" evidence="1">
    <location>
        <begin position="295"/>
        <end position="296"/>
    </location>
    <ligand>
        <name>FMN</name>
        <dbReference type="ChEBI" id="CHEBI:58210"/>
    </ligand>
</feature>
<comment type="function">
    <text evidence="1">Involved in the biosynthesis of isoprenoids. Catalyzes the 1,3-allylic rearrangement of the homoallylic substrate isopentenyl (IPP) to its allylic isomer, dimethylallyl diphosphate (DMAPP).</text>
</comment>
<comment type="catalytic activity">
    <reaction evidence="1">
        <text>isopentenyl diphosphate = dimethylallyl diphosphate</text>
        <dbReference type="Rhea" id="RHEA:23284"/>
        <dbReference type="ChEBI" id="CHEBI:57623"/>
        <dbReference type="ChEBI" id="CHEBI:128769"/>
        <dbReference type="EC" id="5.3.3.2"/>
    </reaction>
</comment>
<comment type="cofactor">
    <cofactor evidence="1">
        <name>FMN</name>
        <dbReference type="ChEBI" id="CHEBI:58210"/>
    </cofactor>
</comment>
<comment type="cofactor">
    <cofactor evidence="1">
        <name>NADPH</name>
        <dbReference type="ChEBI" id="CHEBI:57783"/>
    </cofactor>
</comment>
<comment type="cofactor">
    <cofactor evidence="1">
        <name>Mg(2+)</name>
        <dbReference type="ChEBI" id="CHEBI:18420"/>
    </cofactor>
</comment>
<comment type="subunit">
    <text evidence="1">Homooctamer. Dimer of tetramers.</text>
</comment>
<comment type="subcellular location">
    <subcellularLocation>
        <location evidence="1">Cytoplasm</location>
    </subcellularLocation>
</comment>
<comment type="similarity">
    <text evidence="1">Belongs to the IPP isomerase type 2 family.</text>
</comment>
<organism>
    <name type="scientific">Rickettsia peacockii (strain Rustic)</name>
    <dbReference type="NCBI Taxonomy" id="562019"/>
    <lineage>
        <taxon>Bacteria</taxon>
        <taxon>Pseudomonadati</taxon>
        <taxon>Pseudomonadota</taxon>
        <taxon>Alphaproteobacteria</taxon>
        <taxon>Rickettsiales</taxon>
        <taxon>Rickettsiaceae</taxon>
        <taxon>Rickettsieae</taxon>
        <taxon>Rickettsia</taxon>
        <taxon>spotted fever group</taxon>
    </lineage>
</organism>